<sequence>MDHMISENGETSAEGSICGYDSLHQLLSANLKPELYQEVNRLLLGRNCGRSLEQIVLPESAKALSSKHDFDLQAASFSADKEQMRNPRVVRVGLIQNSIALPTTAPFSDQTRGIFDKLKPIIDAAGVAGVNILCLQEAWTMPFAFCTRERRWCEFAEPVDGESTKFLQELAKKYNMVIVSPILERDIDHGEVLWNTAVIIGNNGNIIGKHRKNHIPRVGDFNESTYYMEGDTGHPVFETVFGKIAVNICYGRHHPLNWLAFGLNGAEIVFNPSATVGELSEPMWPIEARNAAIANSYFVGSINRVGTEVFPNPFTSGDGKPQHNDFGHFYGSSHFSAPDASCTPSLSRYKDGLLISDMDLNLCRQYKDKWGFRMTARYEVYADLLAKYIKPDFKPQVVSDPLLHKNST</sequence>
<feature type="chain" id="PRO_0000432456" description="Beta-ureidopropionase">
    <location>
        <begin position="1"/>
        <end position="408"/>
    </location>
</feature>
<feature type="domain" description="CN hydrolase" evidence="2">
    <location>
        <begin position="90"/>
        <end position="360"/>
    </location>
</feature>
<feature type="active site" description="Proton acceptor" evidence="2">
    <location>
        <position position="137"/>
    </location>
</feature>
<feature type="active site" description="Proton donor" evidence="2">
    <location>
        <position position="212"/>
    </location>
</feature>
<feature type="active site" description="Nucleophile" evidence="2">
    <location>
        <position position="249"/>
    </location>
</feature>
<dbReference type="EC" id="3.5.1.6" evidence="3 4"/>
<dbReference type="EMBL" id="AF465754">
    <property type="protein sequence ID" value="AAO33358.1"/>
    <property type="molecule type" value="mRNA"/>
</dbReference>
<dbReference type="EMBL" id="AB008268">
    <property type="protein sequence ID" value="BAB09868.1"/>
    <property type="status" value="ALT_INIT"/>
    <property type="molecule type" value="Genomic_DNA"/>
</dbReference>
<dbReference type="EMBL" id="CP002688">
    <property type="protein sequence ID" value="AED97881.1"/>
    <property type="molecule type" value="Genomic_DNA"/>
</dbReference>
<dbReference type="EMBL" id="BT000451">
    <property type="protein sequence ID" value="AAN17428.1"/>
    <property type="molecule type" value="mRNA"/>
</dbReference>
<dbReference type="EMBL" id="BT008503">
    <property type="protein sequence ID" value="AAP37862.1"/>
    <property type="molecule type" value="mRNA"/>
</dbReference>
<dbReference type="RefSeq" id="NP_201242.2">
    <property type="nucleotide sequence ID" value="NM_125833.5"/>
</dbReference>
<dbReference type="SMR" id="Q8H183"/>
<dbReference type="FunCoup" id="Q8H183">
    <property type="interactions" value="1076"/>
</dbReference>
<dbReference type="STRING" id="3702.Q8H183"/>
<dbReference type="iPTMnet" id="Q8H183"/>
<dbReference type="PaxDb" id="3702-AT5G64370.1"/>
<dbReference type="ProteomicsDB" id="240369"/>
<dbReference type="EnsemblPlants" id="AT5G64370.1">
    <property type="protein sequence ID" value="AT5G64370.1"/>
    <property type="gene ID" value="AT5G64370"/>
</dbReference>
<dbReference type="GeneID" id="836558"/>
<dbReference type="Gramene" id="AT5G64370.1">
    <property type="protein sequence ID" value="AT5G64370.1"/>
    <property type="gene ID" value="AT5G64370"/>
</dbReference>
<dbReference type="KEGG" id="ath:AT5G64370"/>
<dbReference type="Araport" id="AT5G64370"/>
<dbReference type="TAIR" id="AT5G64370">
    <property type="gene designation" value="BETA-UP"/>
</dbReference>
<dbReference type="eggNOG" id="KOG0808">
    <property type="taxonomic scope" value="Eukaryota"/>
</dbReference>
<dbReference type="HOGENOM" id="CLU_030130_4_1_1"/>
<dbReference type="InParanoid" id="Q8H183"/>
<dbReference type="OMA" id="AHADFGH"/>
<dbReference type="PhylomeDB" id="Q8H183"/>
<dbReference type="BioCyc" id="ARA:AT5G64370-MONOMER"/>
<dbReference type="BioCyc" id="MetaCyc:MONOMER-9543"/>
<dbReference type="BRENDA" id="3.5.1.6">
    <property type="organism ID" value="399"/>
</dbReference>
<dbReference type="SABIO-RK" id="Q8H183"/>
<dbReference type="UniPathway" id="UPA00131"/>
<dbReference type="PRO" id="PR:Q8H183"/>
<dbReference type="Proteomes" id="UP000006548">
    <property type="component" value="Chromosome 5"/>
</dbReference>
<dbReference type="ExpressionAtlas" id="Q8H183">
    <property type="expression patterns" value="baseline and differential"/>
</dbReference>
<dbReference type="GO" id="GO:0005829">
    <property type="term" value="C:cytosol"/>
    <property type="evidence" value="ECO:0000314"/>
    <property type="project" value="TAIR"/>
</dbReference>
<dbReference type="GO" id="GO:0003837">
    <property type="term" value="F:beta-ureidopropionase activity"/>
    <property type="evidence" value="ECO:0000314"/>
    <property type="project" value="TAIR"/>
</dbReference>
<dbReference type="GO" id="GO:0019483">
    <property type="term" value="P:beta-alanine biosynthetic process"/>
    <property type="evidence" value="ECO:0007669"/>
    <property type="project" value="UniProtKB-UniPathway"/>
</dbReference>
<dbReference type="GO" id="GO:0043562">
    <property type="term" value="P:cellular response to nitrogen levels"/>
    <property type="evidence" value="ECO:0000270"/>
    <property type="project" value="TAIR"/>
</dbReference>
<dbReference type="GO" id="GO:0006212">
    <property type="term" value="P:uracil catabolic process"/>
    <property type="evidence" value="ECO:0000315"/>
    <property type="project" value="TAIR"/>
</dbReference>
<dbReference type="CDD" id="cd07587">
    <property type="entry name" value="ML_beta-AS"/>
    <property type="match status" value="1"/>
</dbReference>
<dbReference type="FunFam" id="3.60.110.10:FF:000008">
    <property type="entry name" value="Beta-alanine synthase"/>
    <property type="match status" value="1"/>
</dbReference>
<dbReference type="Gene3D" id="3.60.110.10">
    <property type="entry name" value="Carbon-nitrogen hydrolase"/>
    <property type="match status" value="1"/>
</dbReference>
<dbReference type="InterPro" id="IPR050345">
    <property type="entry name" value="Aliph_Amidase/BUP"/>
</dbReference>
<dbReference type="InterPro" id="IPR003010">
    <property type="entry name" value="C-N_Hydrolase"/>
</dbReference>
<dbReference type="InterPro" id="IPR036526">
    <property type="entry name" value="C-N_Hydrolase_sf"/>
</dbReference>
<dbReference type="PANTHER" id="PTHR43674:SF2">
    <property type="entry name" value="BETA-UREIDOPROPIONASE"/>
    <property type="match status" value="1"/>
</dbReference>
<dbReference type="PANTHER" id="PTHR43674">
    <property type="entry name" value="NITRILASE C965.09-RELATED"/>
    <property type="match status" value="1"/>
</dbReference>
<dbReference type="Pfam" id="PF00795">
    <property type="entry name" value="CN_hydrolase"/>
    <property type="match status" value="1"/>
</dbReference>
<dbReference type="SUPFAM" id="SSF56317">
    <property type="entry name" value="Carbon-nitrogen hydrolase"/>
    <property type="match status" value="1"/>
</dbReference>
<dbReference type="PROSITE" id="PS50263">
    <property type="entry name" value="CN_HYDROLASE"/>
    <property type="match status" value="1"/>
</dbReference>
<evidence type="ECO:0000250" key="1">
    <source>
        <dbReference type="UniProtKB" id="Q9UBR1"/>
    </source>
</evidence>
<evidence type="ECO:0000255" key="2">
    <source>
        <dbReference type="PROSITE-ProRule" id="PRU00054"/>
    </source>
</evidence>
<evidence type="ECO:0000269" key="3">
    <source>
    </source>
</evidence>
<evidence type="ECO:0000269" key="4">
    <source>
    </source>
</evidence>
<evidence type="ECO:0000303" key="5">
    <source>
    </source>
</evidence>
<evidence type="ECO:0000303" key="6">
    <source ref="1"/>
</evidence>
<evidence type="ECO:0000305" key="7"/>
<evidence type="ECO:0000312" key="8">
    <source>
        <dbReference type="Araport" id="AT5G64370"/>
    </source>
</evidence>
<evidence type="ECO:0000312" key="9">
    <source>
        <dbReference type="EMBL" id="AAN17428.1"/>
    </source>
</evidence>
<evidence type="ECO:0000312" key="10">
    <source>
        <dbReference type="EMBL" id="BAB09868.1"/>
    </source>
</evidence>
<comment type="function">
    <text evidence="3 4">Catalyzes a late step in pyrimidine degradation. Converts N-carbamoyl-beta-aminoisobutyrate and N-carbamoyl-beta-alanine (3-ureidopropanoate) to, respectively, beta-aminoisobutyrate and beta-alanine, ammonia and carbon dioxide. Involved in the recycling of nitrogen from nucleobases to general nitrogen metabolism.</text>
</comment>
<comment type="catalytic activity">
    <reaction evidence="3 4">
        <text>3-(carbamoylamino)propanoate + H2O + 2 H(+) = beta-alanine + NH4(+) + CO2</text>
        <dbReference type="Rhea" id="RHEA:11184"/>
        <dbReference type="ChEBI" id="CHEBI:11892"/>
        <dbReference type="ChEBI" id="CHEBI:15377"/>
        <dbReference type="ChEBI" id="CHEBI:15378"/>
        <dbReference type="ChEBI" id="CHEBI:16526"/>
        <dbReference type="ChEBI" id="CHEBI:28938"/>
        <dbReference type="ChEBI" id="CHEBI:57966"/>
        <dbReference type="EC" id="3.5.1.6"/>
    </reaction>
</comment>
<comment type="catalytic activity">
    <reaction evidence="1">
        <text>3-(carbamoylamino)-2-methylpropanoate + H2O + 2 H(+) = (R)-3-amino-2-methylpropanoate + NH4(+) + CO2</text>
        <dbReference type="Rhea" id="RHEA:37339"/>
        <dbReference type="ChEBI" id="CHEBI:15377"/>
        <dbReference type="ChEBI" id="CHEBI:15378"/>
        <dbReference type="ChEBI" id="CHEBI:16526"/>
        <dbReference type="ChEBI" id="CHEBI:28938"/>
        <dbReference type="ChEBI" id="CHEBI:57731"/>
        <dbReference type="ChEBI" id="CHEBI:74414"/>
        <dbReference type="EC" id="3.5.1.6"/>
    </reaction>
</comment>
<comment type="pathway">
    <text evidence="3 4">Amino-acid biosynthesis; beta-alanine biosynthesis.</text>
</comment>
<comment type="subunit">
    <text evidence="1">Homodimer, homotetramer, homooctamer; can also form higher homooligomers.</text>
</comment>
<comment type="subcellular location">
    <subcellularLocation>
        <location evidence="4">Cytoplasm</location>
    </subcellularLocation>
</comment>
<comment type="developmental stage">
    <text evidence="4">Up-regulated between days 3 and 5 after germination and during senescence.</text>
</comment>
<comment type="induction">
    <text evidence="4">Up-regulated by nitrogen limitation.</text>
</comment>
<comment type="disruption phenotype">
    <text evidence="4">No visible phenotype, but unable to grow on uracil as sole nitrogen source.</text>
</comment>
<comment type="similarity">
    <text evidence="7">Belongs to the carbon-nitrogen hydrolase superfamily. BUP family.</text>
</comment>
<comment type="sequence caution" evidence="7">
    <conflict type="erroneous initiation">
        <sequence resource="EMBL-CDS" id="BAB09868"/>
    </conflict>
    <text>Truncated N-terminus.</text>
</comment>
<name>BUP1_ARATH</name>
<protein>
    <recommendedName>
        <fullName evidence="5">Beta-ureidopropionase</fullName>
        <ecNumber evidence="3 4">3.5.1.6</ecNumber>
    </recommendedName>
    <alternativeName>
        <fullName evidence="6">N-carbamoyl-beta-alanine amidohydrolase</fullName>
    </alternativeName>
    <alternativeName>
        <fullName evidence="6">Protein PYRIMIDINE 3</fullName>
    </alternativeName>
</protein>
<organism evidence="9">
    <name type="scientific">Arabidopsis thaliana</name>
    <name type="common">Mouse-ear cress</name>
    <dbReference type="NCBI Taxonomy" id="3702"/>
    <lineage>
        <taxon>Eukaryota</taxon>
        <taxon>Viridiplantae</taxon>
        <taxon>Streptophyta</taxon>
        <taxon>Embryophyta</taxon>
        <taxon>Tracheophyta</taxon>
        <taxon>Spermatophyta</taxon>
        <taxon>Magnoliopsida</taxon>
        <taxon>eudicotyledons</taxon>
        <taxon>Gunneridae</taxon>
        <taxon>Pentapetalae</taxon>
        <taxon>rosids</taxon>
        <taxon>malvids</taxon>
        <taxon>Brassicales</taxon>
        <taxon>Brassicaceae</taxon>
        <taxon>Camelineae</taxon>
        <taxon>Arabidopsis</taxon>
    </lineage>
</organism>
<reference key="1">
    <citation type="submission" date="2002-01" db="EMBL/GenBank/DDBJ databases">
        <title>Eukaryotic beta-alanine synthases.</title>
        <authorList>
            <person name="Gojkovic Z."/>
            <person name="Sandrini M.P.B."/>
            <person name="Piskur J."/>
        </authorList>
    </citation>
    <scope>NUCLEOTIDE SEQUENCE [MRNA]</scope>
</reference>
<reference key="2">
    <citation type="journal article" date="1997" name="DNA Res.">
        <title>Structural analysis of Arabidopsis thaliana chromosome 5. III. Sequence features of the regions of 1,191,918 bp covered by seventeen physically assigned P1 clones.</title>
        <authorList>
            <person name="Nakamura Y."/>
            <person name="Sato S."/>
            <person name="Kaneko T."/>
            <person name="Kotani H."/>
            <person name="Asamizu E."/>
            <person name="Miyajima N."/>
            <person name="Tabata S."/>
        </authorList>
    </citation>
    <scope>NUCLEOTIDE SEQUENCE [LARGE SCALE GENOMIC DNA]</scope>
    <source>
        <strain>cv. Columbia</strain>
    </source>
</reference>
<reference key="3">
    <citation type="journal article" date="2017" name="Plant J.">
        <title>Araport11: a complete reannotation of the Arabidopsis thaliana reference genome.</title>
        <authorList>
            <person name="Cheng C.Y."/>
            <person name="Krishnakumar V."/>
            <person name="Chan A.P."/>
            <person name="Thibaud-Nissen F."/>
            <person name="Schobel S."/>
            <person name="Town C.D."/>
        </authorList>
    </citation>
    <scope>GENOME REANNOTATION</scope>
    <source>
        <strain>cv. Columbia</strain>
    </source>
</reference>
<reference key="4">
    <citation type="journal article" date="2003" name="Science">
        <title>Empirical analysis of transcriptional activity in the Arabidopsis genome.</title>
        <authorList>
            <person name="Yamada K."/>
            <person name="Lim J."/>
            <person name="Dale J.M."/>
            <person name="Chen H."/>
            <person name="Shinn P."/>
            <person name="Palm C.J."/>
            <person name="Southwick A.M."/>
            <person name="Wu H.C."/>
            <person name="Kim C.J."/>
            <person name="Nguyen M."/>
            <person name="Pham P.K."/>
            <person name="Cheuk R.F."/>
            <person name="Karlin-Newmann G."/>
            <person name="Liu S.X."/>
            <person name="Lam B."/>
            <person name="Sakano H."/>
            <person name="Wu T."/>
            <person name="Yu G."/>
            <person name="Miranda M."/>
            <person name="Quach H.L."/>
            <person name="Tripp M."/>
            <person name="Chang C.H."/>
            <person name="Lee J.M."/>
            <person name="Toriumi M.J."/>
            <person name="Chan M.M."/>
            <person name="Tang C.C."/>
            <person name="Onodera C.S."/>
            <person name="Deng J.M."/>
            <person name="Akiyama K."/>
            <person name="Ansari Y."/>
            <person name="Arakawa T."/>
            <person name="Banh J."/>
            <person name="Banno F."/>
            <person name="Bowser L."/>
            <person name="Brooks S.Y."/>
            <person name="Carninci P."/>
            <person name="Chao Q."/>
            <person name="Choy N."/>
            <person name="Enju A."/>
            <person name="Goldsmith A.D."/>
            <person name="Gurjal M."/>
            <person name="Hansen N.F."/>
            <person name="Hayashizaki Y."/>
            <person name="Johnson-Hopson C."/>
            <person name="Hsuan V.W."/>
            <person name="Iida K."/>
            <person name="Karnes M."/>
            <person name="Khan S."/>
            <person name="Koesema E."/>
            <person name="Ishida J."/>
            <person name="Jiang P.X."/>
            <person name="Jones T."/>
            <person name="Kawai J."/>
            <person name="Kamiya A."/>
            <person name="Meyers C."/>
            <person name="Nakajima M."/>
            <person name="Narusaka M."/>
            <person name="Seki M."/>
            <person name="Sakurai T."/>
            <person name="Satou M."/>
            <person name="Tamse R."/>
            <person name="Vaysberg M."/>
            <person name="Wallender E.K."/>
            <person name="Wong C."/>
            <person name="Yamamura Y."/>
            <person name="Yuan S."/>
            <person name="Shinozaki K."/>
            <person name="Davis R.W."/>
            <person name="Theologis A."/>
            <person name="Ecker J.R."/>
        </authorList>
    </citation>
    <scope>NUCLEOTIDE SEQUENCE [LARGE SCALE MRNA]</scope>
    <source>
        <strain>cv. Columbia</strain>
    </source>
</reference>
<reference key="5">
    <citation type="journal article" date="2001" name="Plant Physiol.">
        <title>Characterization of plant beta-ureidopropionase and functional overexpression in Escherichia coli.</title>
        <authorList>
            <person name="Walsh T.A."/>
            <person name="Green S.B."/>
            <person name="Larrinua I.M."/>
            <person name="Schmitzer P.R."/>
        </authorList>
    </citation>
    <scope>NUCLEOTIDE SEQUENCE [MRNA] OF 17-408</scope>
    <scope>FUNCTION</scope>
    <scope>CATALYTIC ACTIVITY</scope>
    <scope>PATHWAY</scope>
</reference>
<reference key="6">
    <citation type="journal article" date="2009" name="New Phytol.">
        <title>A functional analysis of the pyrimidine catabolic pathway in Arabidopsis.</title>
        <authorList>
            <person name="Zrenner R."/>
            <person name="Riegler H."/>
            <person name="Marquard C.R."/>
            <person name="Lange P.R."/>
            <person name="Geserick C."/>
            <person name="Bartosz C.E."/>
            <person name="Chen C.T."/>
            <person name="Slocum R.D."/>
        </authorList>
    </citation>
    <scope>FUNCTION</scope>
    <scope>CATALYTIC ACTIVITY</scope>
    <scope>DEVELOPMENTAL STAGE</scope>
    <scope>INDUCTION BY NITROGEN LIMITATION</scope>
    <scope>SUBCELLULAR LOCATION</scope>
    <scope>DISRUPTION PHENOTYPE</scope>
    <source>
        <strain>cv. Columbia</strain>
    </source>
</reference>
<proteinExistence type="evidence at protein level"/>
<gene>
    <name evidence="6" type="primary">PYD3</name>
    <name evidence="5" type="synonym">BETA-UP</name>
    <name evidence="8" type="ordered locus">At5g64370</name>
    <name evidence="10" type="ORF">MSJ1.21</name>
</gene>
<keyword id="KW-0963">Cytoplasm</keyword>
<keyword id="KW-0378">Hydrolase</keyword>
<keyword id="KW-1185">Reference proteome</keyword>
<accession>Q8H183</accession>
<accession>Q9FMF2</accession>